<reference evidence="7" key="1">
    <citation type="journal article" date="1998" name="Science">
        <title>Genome sequence of the nematode C. elegans: a platform for investigating biology.</title>
        <authorList>
            <consortium name="The C. elegans sequencing consortium"/>
        </authorList>
    </citation>
    <scope>NUCLEOTIDE SEQUENCE [LARGE SCALE GENOMIC DNA]</scope>
    <source>
        <strain evidence="7">Bristol N2</strain>
    </source>
</reference>
<reference evidence="6" key="2">
    <citation type="journal article" date="2006" name="Dev. Cell">
        <title>The PLZF-like protein TRA-4 cooperates with the Gli-like transcription factor TRA-1 to promote female development in C. elegans.</title>
        <authorList>
            <person name="Grote P."/>
            <person name="Conradt B."/>
        </authorList>
    </citation>
    <scope>FUNCTION</scope>
    <scope>INTERACTION WITH HDA-1 AND NASP-1</scope>
    <scope>SUBCELLULAR LOCATION</scope>
    <scope>DEVELOPMENTAL STAGE</scope>
    <scope>MUTAGENESIS OF 381-TYR--GLU-543 AND HIS-493</scope>
</reference>
<protein>
    <recommendedName>
        <fullName evidence="6">Zinc finger protein tra-4</fullName>
    </recommendedName>
    <alternativeName>
        <fullName evidence="5">PLZF-like protein tra-4</fullName>
    </alternativeName>
</protein>
<gene>
    <name evidence="8" type="primary">tra-4</name>
    <name evidence="8" type="ORF">F53B3.1</name>
</gene>
<comment type="function">
    <text evidence="4">Probable transcription factor (PubMed:17011494). Promotes normal hermaphrodite (XX) development, in concert with histone deacetylase hda-1 and nasp-1, perhaps as components of a complex (PubMed:17011494). May cooperate with transcription factor tra-1 to repress male-specific genes in hermaphrodites (PubMed:17011494). Synthetic multivulva (synMuv) class B protein, required to repress the induction of vulval development by let-60 Ras signaling (PubMed:17011494).</text>
</comment>
<comment type="subunit">
    <text evidence="4">Interacts with histone deacetylase hda-1 (PubMed:17011494). May interact with nasp-1 (PubMed:17011494).</text>
</comment>
<comment type="interaction">
    <interactant intactId="EBI-315012">
        <id>Q20709</id>
    </interactant>
    <interactant intactId="EBI-318782">
        <id>Q9NAN2</id>
        <label>par-6</label>
    </interactant>
    <organismsDiffer>false</organismsDiffer>
    <experiments>5</experiments>
</comment>
<comment type="interaction">
    <interactant intactId="EBI-315012">
        <id>Q20709</id>
    </interactant>
    <interactant intactId="EBI-311938">
        <id>Q22174</id>
        <label>slfl-5</label>
    </interactant>
    <organismsDiffer>false</organismsDiffer>
    <experiments>3</experiments>
</comment>
<comment type="subcellular location">
    <subcellularLocation>
        <location evidence="4">Nucleus</location>
    </subcellularLocation>
</comment>
<comment type="developmental stage">
    <text evidence="4">Expressed widely from the 28-cell stage of embryogenesis and throughout development and adult life.</text>
</comment>
<comment type="similarity">
    <text evidence="6">Belongs to the krueppel C2H2-type zinc-finger protein family.</text>
</comment>
<feature type="chain" id="PRO_0000452695" description="Zinc finger protein tra-4">
    <location>
        <begin position="1"/>
        <end position="543"/>
    </location>
</feature>
<feature type="zinc finger region" description="C2H2-type 1" evidence="2">
    <location>
        <begin position="218"/>
        <end position="241"/>
    </location>
</feature>
<feature type="zinc finger region" description="C2H2-type 2" evidence="2">
    <location>
        <begin position="327"/>
        <end position="350"/>
    </location>
</feature>
<feature type="zinc finger region" description="C2H2-type 3" evidence="1">
    <location>
        <begin position="381"/>
        <end position="406"/>
    </location>
</feature>
<feature type="zinc finger region" description="C2H2-type 4" evidence="2">
    <location>
        <begin position="413"/>
        <end position="436"/>
    </location>
</feature>
<feature type="zinc finger region" description="C2H2-type 5" evidence="2">
    <location>
        <begin position="442"/>
        <end position="464"/>
    </location>
</feature>
<feature type="zinc finger region" description="C2H2-type 6" evidence="2">
    <location>
        <begin position="470"/>
        <end position="493"/>
    </location>
</feature>
<feature type="zinc finger region" description="C2H2-type 7" evidence="1">
    <location>
        <begin position="495"/>
        <end position="518"/>
    </location>
</feature>
<feature type="region of interest" description="Disordered" evidence="3">
    <location>
        <begin position="1"/>
        <end position="38"/>
    </location>
</feature>
<feature type="compositionally biased region" description="Basic and acidic residues" evidence="3">
    <location>
        <begin position="10"/>
        <end position="20"/>
    </location>
</feature>
<feature type="mutagenesis site" description="In bc250; masculinization of (XX) hermaphrodites. Male-specific cephalic companion neurons (CEMs) found in 97% hermaphrodites, and hermaphrodite-specific neurons (HSNs) found in only 5% of hermaphrodites. On a lin-8 (SynMuv Class A gene) mutant background, induces multiple vulval invaginations." evidence="4">
    <location>
        <begin position="381"/>
        <end position="543"/>
    </location>
</feature>
<feature type="mutagenesis site" description="In bc45; weak masculinization of hermaphrodites. Male-specific cephalic companion neurons (CEMs) found in 67% hermaphrodites, and hermaphrodite-specific neurons (HSNs) found in only 24% of hermaphrodites." evidence="4">
    <original>H</original>
    <variation>Y</variation>
    <location>
        <position position="493"/>
    </location>
</feature>
<organism evidence="7">
    <name type="scientific">Caenorhabditis elegans</name>
    <dbReference type="NCBI Taxonomy" id="6239"/>
    <lineage>
        <taxon>Eukaryota</taxon>
        <taxon>Metazoa</taxon>
        <taxon>Ecdysozoa</taxon>
        <taxon>Nematoda</taxon>
        <taxon>Chromadorea</taxon>
        <taxon>Rhabditida</taxon>
        <taxon>Rhabditina</taxon>
        <taxon>Rhabditomorpha</taxon>
        <taxon>Rhabditoidea</taxon>
        <taxon>Rhabditidae</taxon>
        <taxon>Peloderinae</taxon>
        <taxon>Caenorhabditis</taxon>
    </lineage>
</organism>
<keyword id="KW-0479">Metal-binding</keyword>
<keyword id="KW-0539">Nucleus</keyword>
<keyword id="KW-1185">Reference proteome</keyword>
<keyword id="KW-0677">Repeat</keyword>
<keyword id="KW-0804">Transcription</keyword>
<keyword id="KW-0805">Transcription regulation</keyword>
<keyword id="KW-0862">Zinc</keyword>
<keyword id="KW-0863">Zinc-finger</keyword>
<name>TRA4_CAEEL</name>
<proteinExistence type="evidence at protein level"/>
<evidence type="ECO:0000255" key="1"/>
<evidence type="ECO:0000255" key="2">
    <source>
        <dbReference type="PROSITE-ProRule" id="PRU00042"/>
    </source>
</evidence>
<evidence type="ECO:0000256" key="3">
    <source>
        <dbReference type="SAM" id="MobiDB-lite"/>
    </source>
</evidence>
<evidence type="ECO:0000269" key="4">
    <source>
    </source>
</evidence>
<evidence type="ECO:0000303" key="5">
    <source>
    </source>
</evidence>
<evidence type="ECO:0000305" key="6"/>
<evidence type="ECO:0000312" key="7">
    <source>
        <dbReference type="Proteomes" id="UP000001940"/>
    </source>
</evidence>
<evidence type="ECO:0000312" key="8">
    <source>
        <dbReference type="WormBase" id="F53B3.1"/>
    </source>
</evidence>
<dbReference type="EMBL" id="BX284606">
    <property type="protein sequence ID" value="CCD61859.1"/>
    <property type="molecule type" value="Genomic_DNA"/>
</dbReference>
<dbReference type="PIR" id="T16449">
    <property type="entry name" value="T16449"/>
</dbReference>
<dbReference type="RefSeq" id="NP_001370327.1">
    <property type="nucleotide sequence ID" value="NM_001383535.2"/>
</dbReference>
<dbReference type="RefSeq" id="NP_508494.1">
    <property type="nucleotide sequence ID" value="NM_076093.3"/>
</dbReference>
<dbReference type="SMR" id="Q20709"/>
<dbReference type="DIP" id="DIP-25182N"/>
<dbReference type="FunCoup" id="Q20709">
    <property type="interactions" value="547"/>
</dbReference>
<dbReference type="IntAct" id="Q20709">
    <property type="interactions" value="21"/>
</dbReference>
<dbReference type="STRING" id="6239.F53B3.1.2"/>
<dbReference type="PaxDb" id="6239-F53B3.1"/>
<dbReference type="PeptideAtlas" id="Q20709"/>
<dbReference type="EnsemblMetazoa" id="F53B3.1.1">
    <property type="protein sequence ID" value="F53B3.1.1"/>
    <property type="gene ID" value="WBGene00018740"/>
</dbReference>
<dbReference type="EnsemblMetazoa" id="F53B3.1.2">
    <property type="protein sequence ID" value="F53B3.1.2"/>
    <property type="gene ID" value="WBGene00018740"/>
</dbReference>
<dbReference type="GeneID" id="180575"/>
<dbReference type="UCSC" id="F53B3.1">
    <property type="organism name" value="c. elegans"/>
</dbReference>
<dbReference type="AGR" id="WB:WBGene00018740"/>
<dbReference type="WormBase" id="F53B3.1">
    <property type="protein sequence ID" value="CE28444"/>
    <property type="gene ID" value="WBGene00018740"/>
    <property type="gene designation" value="tra-4"/>
</dbReference>
<dbReference type="eggNOG" id="KOG1721">
    <property type="taxonomic scope" value="Eukaryota"/>
</dbReference>
<dbReference type="GeneTree" id="ENSGT00970000196688"/>
<dbReference type="HOGENOM" id="CLU_030063_0_0_1"/>
<dbReference type="InParanoid" id="Q20709"/>
<dbReference type="OMA" id="EMVEFKQ"/>
<dbReference type="OrthoDB" id="6077919at2759"/>
<dbReference type="PhylomeDB" id="Q20709"/>
<dbReference type="Reactome" id="R-CEL-9843940">
    <property type="pathway name" value="Regulation of endogenous retroelements by KRAB-ZFP proteins"/>
</dbReference>
<dbReference type="SignaLink" id="Q20709"/>
<dbReference type="PRO" id="PR:Q20709"/>
<dbReference type="Proteomes" id="UP000001940">
    <property type="component" value="Chromosome X"/>
</dbReference>
<dbReference type="Bgee" id="WBGene00018740">
    <property type="expression patterns" value="Expressed in embryo and 4 other cell types or tissues"/>
</dbReference>
<dbReference type="GO" id="GO:0005634">
    <property type="term" value="C:nucleus"/>
    <property type="evidence" value="ECO:0000314"/>
    <property type="project" value="UniProtKB"/>
</dbReference>
<dbReference type="GO" id="GO:0003700">
    <property type="term" value="F:DNA-binding transcription factor activity"/>
    <property type="evidence" value="ECO:0000318"/>
    <property type="project" value="GO_Central"/>
</dbReference>
<dbReference type="GO" id="GO:0042826">
    <property type="term" value="F:histone deacetylase binding"/>
    <property type="evidence" value="ECO:0000353"/>
    <property type="project" value="UniProtKB"/>
</dbReference>
<dbReference type="GO" id="GO:0000978">
    <property type="term" value="F:RNA polymerase II cis-regulatory region sequence-specific DNA binding"/>
    <property type="evidence" value="ECO:0000318"/>
    <property type="project" value="GO_Central"/>
</dbReference>
<dbReference type="GO" id="GO:0008270">
    <property type="term" value="F:zinc ion binding"/>
    <property type="evidence" value="ECO:0007669"/>
    <property type="project" value="UniProtKB-KW"/>
</dbReference>
<dbReference type="GO" id="GO:0042001">
    <property type="term" value="P:hermaphrodite somatic sex determination"/>
    <property type="evidence" value="ECO:0000315"/>
    <property type="project" value="UniProtKB"/>
</dbReference>
<dbReference type="GO" id="GO:0040027">
    <property type="term" value="P:negative regulation of vulval development"/>
    <property type="evidence" value="ECO:0000316"/>
    <property type="project" value="UniProtKB"/>
</dbReference>
<dbReference type="GO" id="GO:0010468">
    <property type="term" value="P:regulation of gene expression"/>
    <property type="evidence" value="ECO:0000315"/>
    <property type="project" value="UniProtKB"/>
</dbReference>
<dbReference type="GO" id="GO:0006357">
    <property type="term" value="P:regulation of transcription by RNA polymerase II"/>
    <property type="evidence" value="ECO:0000318"/>
    <property type="project" value="GO_Central"/>
</dbReference>
<dbReference type="Gene3D" id="3.30.160.60">
    <property type="entry name" value="Classic Zinc Finger"/>
    <property type="match status" value="1"/>
</dbReference>
<dbReference type="InterPro" id="IPR036236">
    <property type="entry name" value="Znf_C2H2_sf"/>
</dbReference>
<dbReference type="InterPro" id="IPR013087">
    <property type="entry name" value="Znf_C2H2_type"/>
</dbReference>
<dbReference type="PANTHER" id="PTHR24379:SF121">
    <property type="entry name" value="C2H2-TYPE DOMAIN-CONTAINING PROTEIN"/>
    <property type="match status" value="1"/>
</dbReference>
<dbReference type="PANTHER" id="PTHR24379">
    <property type="entry name" value="KRAB AND ZINC FINGER DOMAIN-CONTAINING"/>
    <property type="match status" value="1"/>
</dbReference>
<dbReference type="SMART" id="SM00355">
    <property type="entry name" value="ZnF_C2H2"/>
    <property type="match status" value="7"/>
</dbReference>
<dbReference type="SUPFAM" id="SSF57667">
    <property type="entry name" value="beta-beta-alpha zinc fingers"/>
    <property type="match status" value="1"/>
</dbReference>
<dbReference type="PROSITE" id="PS00028">
    <property type="entry name" value="ZINC_FINGER_C2H2_1"/>
    <property type="match status" value="4"/>
</dbReference>
<dbReference type="PROSITE" id="PS50157">
    <property type="entry name" value="ZINC_FINGER_C2H2_2"/>
    <property type="match status" value="2"/>
</dbReference>
<sequence>MDDPNQCTIKQEDSITRPRPTEAPTIQNLKQEPAIEEGSSSTMDNMLMLTIDTNQANWQGTYDDDEMDLNNKTDLIPLLETEKTTINEDELYDDEEDDDDDEEIKKGIGFELLAQALGMSAKVPVEKEEPEKERAKLSGVGEFMKQIRGEIKPIQKERIVLDELGFRVRDPSKFPPCRIAEVQQTLTLADHQDGIDLPPPNAPTDVRIVRKLIRQKMVRCKKCKNRFIEKNIYERHLRDKHPDLYEEYIREQEEEVELQRLEEIEANRIEELQTGGFIPPENEISQPSEDPNYIPLPGENNGGLVPRFDYYGRIKQLKRPYKKKVSPQCPFCDKRFRNEFSLKKHFAKKHEEMVEFQQCLKCFKCVENDAEMANHDCELTYVCFECTPIRNLCTDNRLLNHRKKFHRGANSGFRCSFCNMKFLTPRKLRKHKKMSHVFTKTFQCHFCEEIFISEVAVMTHERMHTGIIKFECKVCDFRANRYTAMEEHKRDEHGYVCAICHERHAEYPEMKHHVYEEHGGYLAADEPTAYVETPRMWILYKGE</sequence>
<accession>Q20709</accession>